<keyword id="KW-0665">Pyrimidine biosynthesis</keyword>
<keyword id="KW-0808">Transferase</keyword>
<gene>
    <name evidence="1" type="primary">pyrB</name>
    <name type="ordered locus">LBF_0992</name>
</gene>
<protein>
    <recommendedName>
        <fullName evidence="1">Aspartate carbamoyltransferase catalytic subunit</fullName>
        <ecNumber evidence="1">2.1.3.2</ecNumber>
    </recommendedName>
    <alternativeName>
        <fullName evidence="1">Aspartate transcarbamylase</fullName>
        <shortName evidence="1">ATCase</shortName>
    </alternativeName>
</protein>
<evidence type="ECO:0000255" key="1">
    <source>
        <dbReference type="HAMAP-Rule" id="MF_00001"/>
    </source>
</evidence>
<sequence length="310" mass="35050">MYAYSHKNILDTLQFSKDDLNYLITKTNRMNALHESGKAFGILHGKLLASLFFEASTRTRMSFEAAMERLGGRLISTVGFQFSSISKGETLYDTMKMIEAYCDIAVIRHPVEGSSRIAAGAVNIPVINAGDGAGQHPTQALLDLYTIVSEKGKIDGLNIAFIGDLKYGRTIHSLINLLRHYPVHLYLISPEELRLPEKYKKNLEGFPMTWEETTDIKAIWDADVAYVTRIQEERFPDHREYEKLKDIYKVNKELVLASKKDTTILHPLPRVNELSTDVDDLPNAAYFRQAKYGVVVRMALLCLSLGVNFD</sequence>
<name>PYRB_LEPBA</name>
<reference key="1">
    <citation type="journal article" date="2008" name="PLoS ONE">
        <title>Genome sequence of the saprophyte Leptospira biflexa provides insights into the evolution of Leptospira and the pathogenesis of leptospirosis.</title>
        <authorList>
            <person name="Picardeau M."/>
            <person name="Bulach D.M."/>
            <person name="Bouchier C."/>
            <person name="Zuerner R.L."/>
            <person name="Zidane N."/>
            <person name="Wilson P.J."/>
            <person name="Creno S."/>
            <person name="Kuczek E.S."/>
            <person name="Bommezzadri S."/>
            <person name="Davis J.C."/>
            <person name="McGrath A."/>
            <person name="Johnson M.J."/>
            <person name="Boursaux-Eude C."/>
            <person name="Seemann T."/>
            <person name="Rouy Z."/>
            <person name="Coppel R.L."/>
            <person name="Rood J.I."/>
            <person name="Lajus A."/>
            <person name="Davies J.K."/>
            <person name="Medigue C."/>
            <person name="Adler B."/>
        </authorList>
    </citation>
    <scope>NUCLEOTIDE SEQUENCE [LARGE SCALE GENOMIC DNA]</scope>
    <source>
        <strain>Patoc 1 / Ames</strain>
    </source>
</reference>
<comment type="function">
    <text evidence="1">Catalyzes the condensation of carbamoyl phosphate and aspartate to form carbamoyl aspartate and inorganic phosphate, the committed step in the de novo pyrimidine nucleotide biosynthesis pathway.</text>
</comment>
<comment type="catalytic activity">
    <reaction evidence="1">
        <text>carbamoyl phosphate + L-aspartate = N-carbamoyl-L-aspartate + phosphate + H(+)</text>
        <dbReference type="Rhea" id="RHEA:20013"/>
        <dbReference type="ChEBI" id="CHEBI:15378"/>
        <dbReference type="ChEBI" id="CHEBI:29991"/>
        <dbReference type="ChEBI" id="CHEBI:32814"/>
        <dbReference type="ChEBI" id="CHEBI:43474"/>
        <dbReference type="ChEBI" id="CHEBI:58228"/>
        <dbReference type="EC" id="2.1.3.2"/>
    </reaction>
</comment>
<comment type="pathway">
    <text evidence="1">Pyrimidine metabolism; UMP biosynthesis via de novo pathway; (S)-dihydroorotate from bicarbonate: step 2/3.</text>
</comment>
<comment type="subunit">
    <text evidence="1">Heterododecamer (2C3:3R2) of six catalytic PyrB chains organized as two trimers (C3), and six regulatory PyrI chains organized as three dimers (R2).</text>
</comment>
<comment type="similarity">
    <text evidence="1">Belongs to the aspartate/ornithine carbamoyltransferase superfamily. ATCase family.</text>
</comment>
<dbReference type="EC" id="2.1.3.2" evidence="1"/>
<dbReference type="EMBL" id="CP000777">
    <property type="protein sequence ID" value="ABZ93519.1"/>
    <property type="molecule type" value="Genomic_DNA"/>
</dbReference>
<dbReference type="RefSeq" id="WP_012388031.1">
    <property type="nucleotide sequence ID" value="NC_010842.1"/>
</dbReference>
<dbReference type="SMR" id="B0SEH6"/>
<dbReference type="KEGG" id="lbf:LBF_0992"/>
<dbReference type="HOGENOM" id="CLU_043846_1_2_12"/>
<dbReference type="UniPathway" id="UPA00070">
    <property type="reaction ID" value="UER00116"/>
</dbReference>
<dbReference type="GO" id="GO:0016597">
    <property type="term" value="F:amino acid binding"/>
    <property type="evidence" value="ECO:0007669"/>
    <property type="project" value="InterPro"/>
</dbReference>
<dbReference type="GO" id="GO:0004070">
    <property type="term" value="F:aspartate carbamoyltransferase activity"/>
    <property type="evidence" value="ECO:0007669"/>
    <property type="project" value="UniProtKB-UniRule"/>
</dbReference>
<dbReference type="GO" id="GO:0006207">
    <property type="term" value="P:'de novo' pyrimidine nucleobase biosynthetic process"/>
    <property type="evidence" value="ECO:0007669"/>
    <property type="project" value="InterPro"/>
</dbReference>
<dbReference type="GO" id="GO:0044205">
    <property type="term" value="P:'de novo' UMP biosynthetic process"/>
    <property type="evidence" value="ECO:0007669"/>
    <property type="project" value="UniProtKB-UniRule"/>
</dbReference>
<dbReference type="GO" id="GO:0006520">
    <property type="term" value="P:amino acid metabolic process"/>
    <property type="evidence" value="ECO:0007669"/>
    <property type="project" value="InterPro"/>
</dbReference>
<dbReference type="FunFam" id="3.40.50.1370:FF:000021">
    <property type="entry name" value="Aspartate carbamoyltransferase"/>
    <property type="match status" value="1"/>
</dbReference>
<dbReference type="Gene3D" id="3.40.50.1370">
    <property type="entry name" value="Aspartate/ornithine carbamoyltransferase"/>
    <property type="match status" value="2"/>
</dbReference>
<dbReference type="HAMAP" id="MF_00001">
    <property type="entry name" value="Asp_carb_tr"/>
    <property type="match status" value="1"/>
</dbReference>
<dbReference type="InterPro" id="IPR006132">
    <property type="entry name" value="Asp/Orn_carbamoyltranf_P-bd"/>
</dbReference>
<dbReference type="InterPro" id="IPR006130">
    <property type="entry name" value="Asp/Orn_carbamoylTrfase"/>
</dbReference>
<dbReference type="InterPro" id="IPR036901">
    <property type="entry name" value="Asp/Orn_carbamoylTrfase_sf"/>
</dbReference>
<dbReference type="InterPro" id="IPR002082">
    <property type="entry name" value="Asp_carbamoyltransf"/>
</dbReference>
<dbReference type="InterPro" id="IPR006131">
    <property type="entry name" value="Asp_carbamoyltransf_Asp/Orn-bd"/>
</dbReference>
<dbReference type="NCBIfam" id="TIGR00670">
    <property type="entry name" value="asp_carb_tr"/>
    <property type="match status" value="1"/>
</dbReference>
<dbReference type="NCBIfam" id="NF002032">
    <property type="entry name" value="PRK00856.1"/>
    <property type="match status" value="1"/>
</dbReference>
<dbReference type="PANTHER" id="PTHR45753:SF6">
    <property type="entry name" value="ASPARTATE CARBAMOYLTRANSFERASE"/>
    <property type="match status" value="1"/>
</dbReference>
<dbReference type="PANTHER" id="PTHR45753">
    <property type="entry name" value="ORNITHINE CARBAMOYLTRANSFERASE, MITOCHONDRIAL"/>
    <property type="match status" value="1"/>
</dbReference>
<dbReference type="Pfam" id="PF00185">
    <property type="entry name" value="OTCace"/>
    <property type="match status" value="1"/>
</dbReference>
<dbReference type="Pfam" id="PF02729">
    <property type="entry name" value="OTCace_N"/>
    <property type="match status" value="1"/>
</dbReference>
<dbReference type="PRINTS" id="PR00100">
    <property type="entry name" value="AOTCASE"/>
</dbReference>
<dbReference type="PRINTS" id="PR00101">
    <property type="entry name" value="ATCASE"/>
</dbReference>
<dbReference type="SUPFAM" id="SSF53671">
    <property type="entry name" value="Aspartate/ornithine carbamoyltransferase"/>
    <property type="match status" value="1"/>
</dbReference>
<dbReference type="PROSITE" id="PS00097">
    <property type="entry name" value="CARBAMOYLTRANSFERASE"/>
    <property type="match status" value="1"/>
</dbReference>
<accession>B0SEH6</accession>
<organism>
    <name type="scientific">Leptospira biflexa serovar Patoc (strain Patoc 1 / Ames)</name>
    <dbReference type="NCBI Taxonomy" id="355278"/>
    <lineage>
        <taxon>Bacteria</taxon>
        <taxon>Pseudomonadati</taxon>
        <taxon>Spirochaetota</taxon>
        <taxon>Spirochaetia</taxon>
        <taxon>Leptospirales</taxon>
        <taxon>Leptospiraceae</taxon>
        <taxon>Leptospira</taxon>
    </lineage>
</organism>
<proteinExistence type="inferred from homology"/>
<feature type="chain" id="PRO_0000334588" description="Aspartate carbamoyltransferase catalytic subunit">
    <location>
        <begin position="1"/>
        <end position="310"/>
    </location>
</feature>
<feature type="binding site" evidence="1">
    <location>
        <position position="58"/>
    </location>
    <ligand>
        <name>carbamoyl phosphate</name>
        <dbReference type="ChEBI" id="CHEBI:58228"/>
    </ligand>
</feature>
<feature type="binding site" evidence="1">
    <location>
        <position position="59"/>
    </location>
    <ligand>
        <name>carbamoyl phosphate</name>
        <dbReference type="ChEBI" id="CHEBI:58228"/>
    </ligand>
</feature>
<feature type="binding site" evidence="1">
    <location>
        <position position="87"/>
    </location>
    <ligand>
        <name>L-aspartate</name>
        <dbReference type="ChEBI" id="CHEBI:29991"/>
    </ligand>
</feature>
<feature type="binding site" evidence="1">
    <location>
        <position position="108"/>
    </location>
    <ligand>
        <name>carbamoyl phosphate</name>
        <dbReference type="ChEBI" id="CHEBI:58228"/>
    </ligand>
</feature>
<feature type="binding site" evidence="1">
    <location>
        <position position="136"/>
    </location>
    <ligand>
        <name>carbamoyl phosphate</name>
        <dbReference type="ChEBI" id="CHEBI:58228"/>
    </ligand>
</feature>
<feature type="binding site" evidence="1">
    <location>
        <position position="139"/>
    </location>
    <ligand>
        <name>carbamoyl phosphate</name>
        <dbReference type="ChEBI" id="CHEBI:58228"/>
    </ligand>
</feature>
<feature type="binding site" evidence="1">
    <location>
        <position position="169"/>
    </location>
    <ligand>
        <name>L-aspartate</name>
        <dbReference type="ChEBI" id="CHEBI:29991"/>
    </ligand>
</feature>
<feature type="binding site" evidence="1">
    <location>
        <position position="229"/>
    </location>
    <ligand>
        <name>L-aspartate</name>
        <dbReference type="ChEBI" id="CHEBI:29991"/>
    </ligand>
</feature>
<feature type="binding site" evidence="1">
    <location>
        <position position="268"/>
    </location>
    <ligand>
        <name>carbamoyl phosphate</name>
        <dbReference type="ChEBI" id="CHEBI:58228"/>
    </ligand>
</feature>
<feature type="binding site" evidence="1">
    <location>
        <position position="269"/>
    </location>
    <ligand>
        <name>carbamoyl phosphate</name>
        <dbReference type="ChEBI" id="CHEBI:58228"/>
    </ligand>
</feature>